<organism>
    <name type="scientific">Mycobacterium ulcerans (strain Agy99)</name>
    <dbReference type="NCBI Taxonomy" id="362242"/>
    <lineage>
        <taxon>Bacteria</taxon>
        <taxon>Bacillati</taxon>
        <taxon>Actinomycetota</taxon>
        <taxon>Actinomycetes</taxon>
        <taxon>Mycobacteriales</taxon>
        <taxon>Mycobacteriaceae</taxon>
        <taxon>Mycobacterium</taxon>
        <taxon>Mycobacterium ulcerans group</taxon>
    </lineage>
</organism>
<sequence length="1176" mass="129489">MLEGRILADFRQTDASLHQGRPQSSSNSSVPGAPNRVSFAKLREPLEVPGLLDVQTDSFEWLIGSQRWRESAAQRGDATPVGGLEEVLYELSPIEDFSGSMSLSFSDPRFDEVKAPVDECKDKDMTYAAPLFVTAEFINNNTGEIKSQTVFMGGFPMMTEKGTFIINGTERVVVSQLVRSPGVYFDETIDKSTDKLLHSVKVIPSRGAWLEFDVDKRDTVGVRIDRKRRQPVTVLLKALGWSNEQIHERFGFSEIMMGTLEKDNTAGTDEALLDIYRKLRPGEPPTKESAQTLLENLFFKEKRYDLARVGRYKVNKKLGLNAGQPITSSTLTEEDVVATIEYLVRLHEGQTAMTAPGGVEVPVETDDIDHFGNRRLRTVGELIQNQIRVGMSRMERVVRERMTTQDVEAITPQTLINIRPVVAAIKEFFGTSQLSQFMDQNNPLSGLTHKRRLSALGPGGLSRERAGLEVRDVHPSHYGRMCPIETPEGPNIGLIGSLSVYARVNPFGFIETPYRKVVDGVVSDEIHYLTADEEDRHVVAQANSPIDAQGRFVEPRVLVRRKAGEVEYVPSSEVDYMDVSPRQMVSVATAMIPFLEHDDANRALMGANMQRQAVPLVRSEAPLVGTGMELRAAIDAGDVVVADKAGVIEEVSADYITVMADDGTRHTYRMRKFARSNHGTCANQSPIVDAGERVEAGQVIADGPCTQNGEMALGKNLLVAIMPWEGHNYEDAIILSNRLVEEDVLTSIHIEEHEIDARDTKLGAEEITRDIPNVSDEVLADLDERGIVRIGAEVRDGDILVGKVTPKGETELTPEERLLRAIFGEKAREVRDTSLKVPHGESGKVIGIRVFSREDDDELPAGVNELVRVYVAQKRKISDGDKLAGRHGNKGVIGKILPAEDMPFLPDGTPVDIILNTHGVPRRMNIGQILETHLGWVAKSGWNIDVANGVPEWAGKLPENLLSAQPDSIVSTPVFDGAQEAELQGLLSATLPNRDGEVLVDGDGKAKLFDGRSGEPFPYPVTVGYMYIMKLHHLVDDKIHARSTGPYSMITQQPLGGKAQFGGQRFGEMECWAMQAYGAAYTLQELLTIKSDDTVGRVKVYEAIVKGENIPEPGIPESFKVLLKELQSLCLNVEVLSSDGAAIELREGEDEDLERAAANLGINLSRNESASVEDLA</sequence>
<dbReference type="EC" id="2.7.7.6" evidence="1"/>
<dbReference type="EMBL" id="CP000325">
    <property type="protein sequence ID" value="ABL03393.1"/>
    <property type="molecule type" value="Genomic_DNA"/>
</dbReference>
<dbReference type="RefSeq" id="WP_011739018.1">
    <property type="nucleotide sequence ID" value="NC_008611.1"/>
</dbReference>
<dbReference type="SMR" id="A0PM24"/>
<dbReference type="KEGG" id="mul:MUL_0746"/>
<dbReference type="eggNOG" id="COG0085">
    <property type="taxonomic scope" value="Bacteria"/>
</dbReference>
<dbReference type="HOGENOM" id="CLU_000524_4_1_11"/>
<dbReference type="Proteomes" id="UP000000765">
    <property type="component" value="Chromosome"/>
</dbReference>
<dbReference type="GO" id="GO:0000428">
    <property type="term" value="C:DNA-directed RNA polymerase complex"/>
    <property type="evidence" value="ECO:0007669"/>
    <property type="project" value="UniProtKB-KW"/>
</dbReference>
<dbReference type="GO" id="GO:0003677">
    <property type="term" value="F:DNA binding"/>
    <property type="evidence" value="ECO:0007669"/>
    <property type="project" value="UniProtKB-UniRule"/>
</dbReference>
<dbReference type="GO" id="GO:0003899">
    <property type="term" value="F:DNA-directed RNA polymerase activity"/>
    <property type="evidence" value="ECO:0007669"/>
    <property type="project" value="UniProtKB-UniRule"/>
</dbReference>
<dbReference type="GO" id="GO:0032549">
    <property type="term" value="F:ribonucleoside binding"/>
    <property type="evidence" value="ECO:0007669"/>
    <property type="project" value="InterPro"/>
</dbReference>
<dbReference type="GO" id="GO:0006351">
    <property type="term" value="P:DNA-templated transcription"/>
    <property type="evidence" value="ECO:0007669"/>
    <property type="project" value="UniProtKB-UniRule"/>
</dbReference>
<dbReference type="CDD" id="cd00653">
    <property type="entry name" value="RNA_pol_B_RPB2"/>
    <property type="match status" value="1"/>
</dbReference>
<dbReference type="FunFam" id="2.40.50.150:FF:000001">
    <property type="entry name" value="DNA-directed RNA polymerase subunit beta"/>
    <property type="match status" value="1"/>
</dbReference>
<dbReference type="FunFam" id="3.90.1800.10:FF:000005">
    <property type="entry name" value="DNA-directed RNA polymerase subunit beta"/>
    <property type="match status" value="1"/>
</dbReference>
<dbReference type="Gene3D" id="2.40.50.100">
    <property type="match status" value="1"/>
</dbReference>
<dbReference type="Gene3D" id="2.40.50.150">
    <property type="match status" value="1"/>
</dbReference>
<dbReference type="Gene3D" id="3.90.1100.10">
    <property type="match status" value="1"/>
</dbReference>
<dbReference type="Gene3D" id="2.30.150.10">
    <property type="entry name" value="DNA-directed RNA polymerase, beta subunit, external 1 domain"/>
    <property type="match status" value="1"/>
</dbReference>
<dbReference type="Gene3D" id="2.40.270.10">
    <property type="entry name" value="DNA-directed RNA polymerase, subunit 2, domain 6"/>
    <property type="match status" value="1"/>
</dbReference>
<dbReference type="Gene3D" id="3.90.1800.10">
    <property type="entry name" value="RNA polymerase alpha subunit dimerisation domain"/>
    <property type="match status" value="1"/>
</dbReference>
<dbReference type="Gene3D" id="3.90.1110.10">
    <property type="entry name" value="RNA polymerase Rpb2, domain 2"/>
    <property type="match status" value="1"/>
</dbReference>
<dbReference type="HAMAP" id="MF_01321">
    <property type="entry name" value="RNApol_bact_RpoB"/>
    <property type="match status" value="1"/>
</dbReference>
<dbReference type="InterPro" id="IPR042107">
    <property type="entry name" value="DNA-dir_RNA_pol_bsu_ext_1_sf"/>
</dbReference>
<dbReference type="InterPro" id="IPR019462">
    <property type="entry name" value="DNA-dir_RNA_pol_bsu_external_1"/>
</dbReference>
<dbReference type="InterPro" id="IPR015712">
    <property type="entry name" value="DNA-dir_RNA_pol_su2"/>
</dbReference>
<dbReference type="InterPro" id="IPR007120">
    <property type="entry name" value="DNA-dir_RNAP_su2_dom"/>
</dbReference>
<dbReference type="InterPro" id="IPR037033">
    <property type="entry name" value="DNA-dir_RNAP_su2_hyb_sf"/>
</dbReference>
<dbReference type="InterPro" id="IPR010243">
    <property type="entry name" value="RNA_pol_bsu_bac"/>
</dbReference>
<dbReference type="InterPro" id="IPR007121">
    <property type="entry name" value="RNA_pol_bsu_CS"/>
</dbReference>
<dbReference type="InterPro" id="IPR007644">
    <property type="entry name" value="RNA_pol_bsu_protrusion"/>
</dbReference>
<dbReference type="InterPro" id="IPR007642">
    <property type="entry name" value="RNA_pol_Rpb2_2"/>
</dbReference>
<dbReference type="InterPro" id="IPR037034">
    <property type="entry name" value="RNA_pol_Rpb2_2_sf"/>
</dbReference>
<dbReference type="InterPro" id="IPR007645">
    <property type="entry name" value="RNA_pol_Rpb2_3"/>
</dbReference>
<dbReference type="InterPro" id="IPR007641">
    <property type="entry name" value="RNA_pol_Rpb2_7"/>
</dbReference>
<dbReference type="InterPro" id="IPR014724">
    <property type="entry name" value="RNA_pol_RPB2_OB-fold"/>
</dbReference>
<dbReference type="NCBIfam" id="NF001616">
    <property type="entry name" value="PRK00405.1"/>
    <property type="match status" value="1"/>
</dbReference>
<dbReference type="NCBIfam" id="TIGR02013">
    <property type="entry name" value="rpoB"/>
    <property type="match status" value="1"/>
</dbReference>
<dbReference type="PANTHER" id="PTHR20856">
    <property type="entry name" value="DNA-DIRECTED RNA POLYMERASE I SUBUNIT 2"/>
    <property type="match status" value="1"/>
</dbReference>
<dbReference type="Pfam" id="PF04563">
    <property type="entry name" value="RNA_pol_Rpb2_1"/>
    <property type="match status" value="1"/>
</dbReference>
<dbReference type="Pfam" id="PF04561">
    <property type="entry name" value="RNA_pol_Rpb2_2"/>
    <property type="match status" value="1"/>
</dbReference>
<dbReference type="Pfam" id="PF04565">
    <property type="entry name" value="RNA_pol_Rpb2_3"/>
    <property type="match status" value="1"/>
</dbReference>
<dbReference type="Pfam" id="PF10385">
    <property type="entry name" value="RNA_pol_Rpb2_45"/>
    <property type="match status" value="1"/>
</dbReference>
<dbReference type="Pfam" id="PF00562">
    <property type="entry name" value="RNA_pol_Rpb2_6"/>
    <property type="match status" value="1"/>
</dbReference>
<dbReference type="Pfam" id="PF04560">
    <property type="entry name" value="RNA_pol_Rpb2_7"/>
    <property type="match status" value="1"/>
</dbReference>
<dbReference type="SUPFAM" id="SSF64484">
    <property type="entry name" value="beta and beta-prime subunits of DNA dependent RNA-polymerase"/>
    <property type="match status" value="1"/>
</dbReference>
<dbReference type="PROSITE" id="PS01166">
    <property type="entry name" value="RNA_POL_BETA"/>
    <property type="match status" value="1"/>
</dbReference>
<gene>
    <name evidence="1" type="primary">rpoB</name>
    <name type="ordered locus">MUL_0746</name>
</gene>
<comment type="function">
    <text evidence="1">DNA-dependent RNA polymerase catalyzes the transcription of DNA into RNA using the four ribonucleoside triphosphates as substrates.</text>
</comment>
<comment type="catalytic activity">
    <reaction evidence="1">
        <text>RNA(n) + a ribonucleoside 5'-triphosphate = RNA(n+1) + diphosphate</text>
        <dbReference type="Rhea" id="RHEA:21248"/>
        <dbReference type="Rhea" id="RHEA-COMP:14527"/>
        <dbReference type="Rhea" id="RHEA-COMP:17342"/>
        <dbReference type="ChEBI" id="CHEBI:33019"/>
        <dbReference type="ChEBI" id="CHEBI:61557"/>
        <dbReference type="ChEBI" id="CHEBI:140395"/>
        <dbReference type="EC" id="2.7.7.6"/>
    </reaction>
</comment>
<comment type="subunit">
    <text evidence="1">The RNAP catalytic core consists of 2 alpha, 1 beta, 1 beta' and 1 omega subunit. When a sigma factor is associated with the core the holoenzyme is formed, which can initiate transcription.</text>
</comment>
<comment type="similarity">
    <text evidence="1">Belongs to the RNA polymerase beta chain family.</text>
</comment>
<feature type="chain" id="PRO_0000300354" description="DNA-directed RNA polymerase subunit beta">
    <location>
        <begin position="1"/>
        <end position="1176"/>
    </location>
</feature>
<feature type="region of interest" description="Disordered" evidence="2">
    <location>
        <begin position="13"/>
        <end position="35"/>
    </location>
</feature>
<feature type="compositionally biased region" description="Polar residues" evidence="2">
    <location>
        <begin position="13"/>
        <end position="30"/>
    </location>
</feature>
<reference key="1">
    <citation type="journal article" date="2007" name="Genome Res.">
        <title>Reductive evolution and niche adaptation inferred from the genome of Mycobacterium ulcerans, the causative agent of Buruli ulcer.</title>
        <authorList>
            <person name="Stinear T.P."/>
            <person name="Seemann T."/>
            <person name="Pidot S."/>
            <person name="Frigui W."/>
            <person name="Reysset G."/>
            <person name="Garnier T."/>
            <person name="Meurice G."/>
            <person name="Simon D."/>
            <person name="Bouchier C."/>
            <person name="Ma L."/>
            <person name="Tichit M."/>
            <person name="Porter J.L."/>
            <person name="Ryan J."/>
            <person name="Johnson P.D.R."/>
            <person name="Davies J.K."/>
            <person name="Jenkin G.A."/>
            <person name="Small P.L.C."/>
            <person name="Jones L.M."/>
            <person name="Tekaia F."/>
            <person name="Laval F."/>
            <person name="Daffe M."/>
            <person name="Parkhill J."/>
            <person name="Cole S.T."/>
        </authorList>
    </citation>
    <scope>NUCLEOTIDE SEQUENCE [LARGE SCALE GENOMIC DNA]</scope>
    <source>
        <strain>Agy99</strain>
    </source>
</reference>
<keyword id="KW-0240">DNA-directed RNA polymerase</keyword>
<keyword id="KW-0548">Nucleotidyltransferase</keyword>
<keyword id="KW-0804">Transcription</keyword>
<keyword id="KW-0808">Transferase</keyword>
<name>RPOB_MYCUA</name>
<proteinExistence type="inferred from homology"/>
<accession>A0PM24</accession>
<evidence type="ECO:0000255" key="1">
    <source>
        <dbReference type="HAMAP-Rule" id="MF_01321"/>
    </source>
</evidence>
<evidence type="ECO:0000256" key="2">
    <source>
        <dbReference type="SAM" id="MobiDB-lite"/>
    </source>
</evidence>
<protein>
    <recommendedName>
        <fullName evidence="1">DNA-directed RNA polymerase subunit beta</fullName>
        <shortName evidence="1">RNAP subunit beta</shortName>
        <ecNumber evidence="1">2.7.7.6</ecNumber>
    </recommendedName>
    <alternativeName>
        <fullName evidence="1">RNA polymerase subunit beta</fullName>
    </alternativeName>
    <alternativeName>
        <fullName evidence="1">Transcriptase subunit beta</fullName>
    </alternativeName>
</protein>